<organism>
    <name type="scientific">Pseudomonas putida</name>
    <name type="common">Arthrobacter siderocapsulatus</name>
    <dbReference type="NCBI Taxonomy" id="303"/>
    <lineage>
        <taxon>Bacteria</taxon>
        <taxon>Pseudomonadati</taxon>
        <taxon>Pseudomonadota</taxon>
        <taxon>Gammaproteobacteria</taxon>
        <taxon>Pseudomonadales</taxon>
        <taxon>Pseudomonadaceae</taxon>
        <taxon>Pseudomonas</taxon>
    </lineage>
</organism>
<gene>
    <name type="primary">bedC2</name>
</gene>
<comment type="function">
    <text>The beta subunit may be responsible for the substrate specificity of the enzyme.</text>
</comment>
<comment type="catalytic activity">
    <reaction>
        <text>benzene + NADH + O2 + H(+) = cis-1,2-dihydrobenzene-1,2-diol + NAD(+)</text>
        <dbReference type="Rhea" id="RHEA:13813"/>
        <dbReference type="ChEBI" id="CHEBI:15378"/>
        <dbReference type="ChEBI" id="CHEBI:15379"/>
        <dbReference type="ChEBI" id="CHEBI:16190"/>
        <dbReference type="ChEBI" id="CHEBI:16716"/>
        <dbReference type="ChEBI" id="CHEBI:57540"/>
        <dbReference type="ChEBI" id="CHEBI:57945"/>
        <dbReference type="EC" id="1.14.12.3"/>
    </reaction>
</comment>
<comment type="pathway">
    <text>Aromatic compound metabolism; benzene degradation; catechol from benzene: step 1/2.</text>
</comment>
<comment type="subunit">
    <text>This dioxygenase system consists of four proteins: the two subunits of the hydroxylase component (BedC1 and BedC2), a ferredoxin (BedB) and a ferredoxin reductase (BedA).</text>
</comment>
<comment type="similarity">
    <text evidence="1">Belongs to the bacterial ring-hydroxylating dioxygenase beta subunit family.</text>
</comment>
<reference key="1">
    <citation type="journal article" date="1993" name="Gene">
        <title>The Pseudomonas putida ML2 plasmid-encoded genes for benzene dioxygenase are unusual in codon usage and low in G+C content.</title>
        <authorList>
            <person name="Tan H.-M."/>
            <person name="Tang H.-Y."/>
            <person name="Joannou C."/>
            <person name="Abdel-Wahab N.H."/>
            <person name="Mason J.R."/>
        </authorList>
    </citation>
    <scope>NUCLEOTIDE SEQUENCE [GENOMIC DNA]</scope>
    <scope>PROTEIN SEQUENCE OF 1-15</scope>
    <source>
        <strain>ML2</strain>
    </source>
</reference>
<protein>
    <recommendedName>
        <fullName>Benzene 1,2-dioxygenase subunit beta</fullName>
        <ecNumber>1.14.12.3</ecNumber>
    </recommendedName>
</protein>
<dbReference type="EC" id="1.14.12.3"/>
<dbReference type="EMBL" id="AF148496">
    <property type="protein sequence ID" value="AAA17759.1"/>
    <property type="molecule type" value="Genomic_DNA"/>
</dbReference>
<dbReference type="PIR" id="JN0813">
    <property type="entry name" value="JN0813"/>
</dbReference>
<dbReference type="SMR" id="Q07945"/>
<dbReference type="BioCyc" id="MetaCyc:MONOMER-12881"/>
<dbReference type="UniPathway" id="UPA00272">
    <property type="reaction ID" value="UER00391"/>
</dbReference>
<dbReference type="GO" id="GO:0018619">
    <property type="term" value="F:benzene 1,2-dioxygenase activity"/>
    <property type="evidence" value="ECO:0007669"/>
    <property type="project" value="UniProtKB-EC"/>
</dbReference>
<dbReference type="GO" id="GO:0019380">
    <property type="term" value="P:3-phenylpropionate catabolic process"/>
    <property type="evidence" value="ECO:0007669"/>
    <property type="project" value="TreeGrafter"/>
</dbReference>
<dbReference type="CDD" id="cd00667">
    <property type="entry name" value="ring_hydroxylating_dioxygenases_beta"/>
    <property type="match status" value="1"/>
</dbReference>
<dbReference type="Gene3D" id="3.10.450.50">
    <property type="match status" value="1"/>
</dbReference>
<dbReference type="InterPro" id="IPR032710">
    <property type="entry name" value="NTF2-like_dom_sf"/>
</dbReference>
<dbReference type="InterPro" id="IPR000391">
    <property type="entry name" value="Rng_hydr_dOase-bsu"/>
</dbReference>
<dbReference type="NCBIfam" id="NF007479">
    <property type="entry name" value="PRK10069.1"/>
    <property type="match status" value="1"/>
</dbReference>
<dbReference type="PANTHER" id="PTHR41534:SF2">
    <property type="entry name" value="3-PHENYLPROPIONATE_CINNAMIC ACID DIOXYGENASE SUBUNIT BETA"/>
    <property type="match status" value="1"/>
</dbReference>
<dbReference type="PANTHER" id="PTHR41534">
    <property type="entry name" value="BLR3401 PROTEIN"/>
    <property type="match status" value="1"/>
</dbReference>
<dbReference type="Pfam" id="PF00866">
    <property type="entry name" value="Ring_hydroxyl_B"/>
    <property type="match status" value="1"/>
</dbReference>
<dbReference type="SUPFAM" id="SSF54427">
    <property type="entry name" value="NTF2-like"/>
    <property type="match status" value="1"/>
</dbReference>
<evidence type="ECO:0000305" key="1"/>
<keyword id="KW-0058">Aromatic hydrocarbons catabolism</keyword>
<keyword id="KW-0223">Dioxygenase</keyword>
<keyword id="KW-0903">Direct protein sequencing</keyword>
<keyword id="KW-0520">NAD</keyword>
<keyword id="KW-0560">Oxidoreductase</keyword>
<keyword id="KW-0614">Plasmid</keyword>
<proteinExistence type="evidence at protein level"/>
<geneLocation type="plasmid">
    <name>pHMT112</name>
</geneLocation>
<name>BEDC2_PSEPU</name>
<sequence length="187" mass="22253">MIDSVNRADLFLRKPAPVALELQNEIEQFYYWEAKLLNDRRFDEWFALLAKDIHYFMPIRTTRIMRDSRLEYSGLRDYAHFDDDATMMKGRLRKITSDVSWSENPASRTRHIVSNVMIIPTEVEGEYEISSTFIVYRNRLERQLDIFAGERRDRLRRNKGEAGFEIVNRTILIDQSTILANNLSFFF</sequence>
<accession>Q07945</accession>
<feature type="chain" id="PRO_0000085066" description="Benzene 1,2-dioxygenase subunit beta">
    <location>
        <begin position="1"/>
        <end position="187"/>
    </location>
</feature>